<sequence>MIPELIKENLFLEDGRALSIETGELARKANGSAVVRMGNTSLLATVVISKESKEDFKFIPLTIDYREKYSAGGKIPGGYIKREGRPYDEEILTMRLVDRLLRPLFKDNYYNEIQIMISLLSYDINVLPDGLAGLVASTAVSISEISFQGPVSTVRIIRINDAFIINPGIEEIKKSDFYLDLDLDLDLIVGGTNNYIILVEGEMREISEIEMMEAIVKAHKYIQLQIEAQISLITKNKKFIKKKLYKIELYNYYYKYINFNLNVFYIKEKIKFISYEEIDYIYKSCLFKQKRSNKIYNILKKIKFHFYNESIVINNLEIDIIFDEIKKEIIKNILFKENIRLDGRSLDDIRNICSQVDCLPGVHGSAIFTRGETQALSTVTLGSSLDVNKIDNAIMRAKQRFYLHYNFPPFSTGEIKLLKGVSRREIGHGNLAQRALKNIIPTTYTIRVVSDVLESNGSSSMATVCASTLALMDSGIIVKRPVSGISMGLIMNYLTGEAIILSDLLGDEDYIGDMDFKITGTEYGMTACQMDIKISGITYDVLSYTIFKAKKGLLFIIKKMLTTLSCPRKSLNITATKIYTFYIPKKLIGAVIGSGGKRIQEIQVSTETNIKIKEKNYLGVIEILGKNETKLKIAILKIKNITFVPKVGTIYKAKVKNIKKFGVFVKISKYLEGLLHIYEISWLTKVESFIRKGDIISVKYLGKNNKFRKIKLSHKMIFSRYYLNKNLK</sequence>
<proteinExistence type="inferred from homology"/>
<name>PNP_KARMG</name>
<comment type="function">
    <text evidence="1">Involved in mRNA degradation. Catalyzes the phosphorolysis of single-stranded polyribonucleotides processively in the 3'- to 5'-direction.</text>
</comment>
<comment type="catalytic activity">
    <reaction evidence="1">
        <text>RNA(n+1) + phosphate = RNA(n) + a ribonucleoside 5'-diphosphate</text>
        <dbReference type="Rhea" id="RHEA:22096"/>
        <dbReference type="Rhea" id="RHEA-COMP:14527"/>
        <dbReference type="Rhea" id="RHEA-COMP:17342"/>
        <dbReference type="ChEBI" id="CHEBI:43474"/>
        <dbReference type="ChEBI" id="CHEBI:57930"/>
        <dbReference type="ChEBI" id="CHEBI:140395"/>
        <dbReference type="EC" id="2.7.7.8"/>
    </reaction>
</comment>
<comment type="cofactor">
    <cofactor evidence="1">
        <name>Mg(2+)</name>
        <dbReference type="ChEBI" id="CHEBI:18420"/>
    </cofactor>
</comment>
<comment type="subcellular location">
    <subcellularLocation>
        <location evidence="1">Cytoplasm</location>
    </subcellularLocation>
</comment>
<comment type="similarity">
    <text evidence="1">Belongs to the polyribonucleotide nucleotidyltransferase family.</text>
</comment>
<evidence type="ECO:0000255" key="1">
    <source>
        <dbReference type="HAMAP-Rule" id="MF_01595"/>
    </source>
</evidence>
<feature type="chain" id="PRO_0000329890" description="Polyribonucleotide nucleotidyltransferase">
    <location>
        <begin position="1"/>
        <end position="728"/>
    </location>
</feature>
<feature type="domain" description="KH" evidence="1">
    <location>
        <begin position="576"/>
        <end position="638"/>
    </location>
</feature>
<feature type="domain" description="S1 motif" evidence="1">
    <location>
        <begin position="648"/>
        <end position="715"/>
    </location>
</feature>
<feature type="binding site" evidence="1">
    <location>
        <position position="509"/>
    </location>
    <ligand>
        <name>Mg(2+)</name>
        <dbReference type="ChEBI" id="CHEBI:18420"/>
    </ligand>
</feature>
<feature type="binding site" evidence="1">
    <location>
        <position position="515"/>
    </location>
    <ligand>
        <name>Mg(2+)</name>
        <dbReference type="ChEBI" id="CHEBI:18420"/>
    </ligand>
</feature>
<gene>
    <name evidence="1" type="primary">pnp</name>
    <name type="ordered locus">SMGWSS_214</name>
</gene>
<keyword id="KW-0963">Cytoplasm</keyword>
<keyword id="KW-0460">Magnesium</keyword>
<keyword id="KW-0479">Metal-binding</keyword>
<keyword id="KW-0548">Nucleotidyltransferase</keyword>
<keyword id="KW-0694">RNA-binding</keyword>
<keyword id="KW-0808">Transferase</keyword>
<dbReference type="EC" id="2.7.7.8" evidence="1"/>
<dbReference type="EMBL" id="CP000770">
    <property type="protein sequence ID" value="ABS30611.1"/>
    <property type="molecule type" value="Genomic_DNA"/>
</dbReference>
<dbReference type="SMR" id="A8Z660"/>
<dbReference type="STRING" id="444179.SMGWSS_214"/>
<dbReference type="KEGG" id="smg:SMGWSS_214"/>
<dbReference type="HOGENOM" id="CLU_004217_2_2_10"/>
<dbReference type="Proteomes" id="UP000000781">
    <property type="component" value="Chromosome"/>
</dbReference>
<dbReference type="GO" id="GO:0005829">
    <property type="term" value="C:cytosol"/>
    <property type="evidence" value="ECO:0007669"/>
    <property type="project" value="TreeGrafter"/>
</dbReference>
<dbReference type="GO" id="GO:0000175">
    <property type="term" value="F:3'-5'-RNA exonuclease activity"/>
    <property type="evidence" value="ECO:0007669"/>
    <property type="project" value="TreeGrafter"/>
</dbReference>
<dbReference type="GO" id="GO:0000287">
    <property type="term" value="F:magnesium ion binding"/>
    <property type="evidence" value="ECO:0007669"/>
    <property type="project" value="UniProtKB-UniRule"/>
</dbReference>
<dbReference type="GO" id="GO:0004654">
    <property type="term" value="F:polyribonucleotide nucleotidyltransferase activity"/>
    <property type="evidence" value="ECO:0007669"/>
    <property type="project" value="UniProtKB-UniRule"/>
</dbReference>
<dbReference type="GO" id="GO:0003723">
    <property type="term" value="F:RNA binding"/>
    <property type="evidence" value="ECO:0007669"/>
    <property type="project" value="UniProtKB-UniRule"/>
</dbReference>
<dbReference type="GO" id="GO:0006402">
    <property type="term" value="P:mRNA catabolic process"/>
    <property type="evidence" value="ECO:0007669"/>
    <property type="project" value="UniProtKB-UniRule"/>
</dbReference>
<dbReference type="GO" id="GO:0006396">
    <property type="term" value="P:RNA processing"/>
    <property type="evidence" value="ECO:0007669"/>
    <property type="project" value="InterPro"/>
</dbReference>
<dbReference type="CDD" id="cd02393">
    <property type="entry name" value="KH-I_PNPase"/>
    <property type="match status" value="1"/>
</dbReference>
<dbReference type="CDD" id="cd11364">
    <property type="entry name" value="RNase_PH_PNPase_2"/>
    <property type="match status" value="1"/>
</dbReference>
<dbReference type="FunFam" id="3.30.230.70:FF:000001">
    <property type="entry name" value="Polyribonucleotide nucleotidyltransferase"/>
    <property type="match status" value="1"/>
</dbReference>
<dbReference type="Gene3D" id="3.30.230.70">
    <property type="entry name" value="GHMP Kinase, N-terminal domain"/>
    <property type="match status" value="2"/>
</dbReference>
<dbReference type="Gene3D" id="3.30.1370.10">
    <property type="entry name" value="K Homology domain, type 1"/>
    <property type="match status" value="1"/>
</dbReference>
<dbReference type="Gene3D" id="2.40.50.140">
    <property type="entry name" value="Nucleic acid-binding proteins"/>
    <property type="match status" value="1"/>
</dbReference>
<dbReference type="HAMAP" id="MF_01595">
    <property type="entry name" value="PNPase"/>
    <property type="match status" value="1"/>
</dbReference>
<dbReference type="InterPro" id="IPR001247">
    <property type="entry name" value="ExoRNase_PH_dom1"/>
</dbReference>
<dbReference type="InterPro" id="IPR015847">
    <property type="entry name" value="ExoRNase_PH_dom2"/>
</dbReference>
<dbReference type="InterPro" id="IPR036345">
    <property type="entry name" value="ExoRNase_PH_dom2_sf"/>
</dbReference>
<dbReference type="InterPro" id="IPR004087">
    <property type="entry name" value="KH_dom"/>
</dbReference>
<dbReference type="InterPro" id="IPR004088">
    <property type="entry name" value="KH_dom_type_1"/>
</dbReference>
<dbReference type="InterPro" id="IPR036612">
    <property type="entry name" value="KH_dom_type_1_sf"/>
</dbReference>
<dbReference type="InterPro" id="IPR012340">
    <property type="entry name" value="NA-bd_OB-fold"/>
</dbReference>
<dbReference type="InterPro" id="IPR012162">
    <property type="entry name" value="PNPase"/>
</dbReference>
<dbReference type="InterPro" id="IPR027408">
    <property type="entry name" value="PNPase/RNase_PH_dom_sf"/>
</dbReference>
<dbReference type="InterPro" id="IPR015848">
    <property type="entry name" value="PNPase_PH_RNA-bd_bac/org-type"/>
</dbReference>
<dbReference type="InterPro" id="IPR020568">
    <property type="entry name" value="Ribosomal_Su5_D2-typ_SF"/>
</dbReference>
<dbReference type="InterPro" id="IPR003029">
    <property type="entry name" value="S1_domain"/>
</dbReference>
<dbReference type="NCBIfam" id="TIGR03591">
    <property type="entry name" value="polynuc_phos"/>
    <property type="match status" value="1"/>
</dbReference>
<dbReference type="NCBIfam" id="NF008805">
    <property type="entry name" value="PRK11824.1"/>
    <property type="match status" value="1"/>
</dbReference>
<dbReference type="PANTHER" id="PTHR11252">
    <property type="entry name" value="POLYRIBONUCLEOTIDE NUCLEOTIDYLTRANSFERASE"/>
    <property type="match status" value="1"/>
</dbReference>
<dbReference type="PANTHER" id="PTHR11252:SF0">
    <property type="entry name" value="POLYRIBONUCLEOTIDE NUCLEOTIDYLTRANSFERASE 1, MITOCHONDRIAL"/>
    <property type="match status" value="1"/>
</dbReference>
<dbReference type="Pfam" id="PF00013">
    <property type="entry name" value="KH_1"/>
    <property type="match status" value="1"/>
</dbReference>
<dbReference type="Pfam" id="PF03726">
    <property type="entry name" value="PNPase"/>
    <property type="match status" value="1"/>
</dbReference>
<dbReference type="Pfam" id="PF01138">
    <property type="entry name" value="RNase_PH"/>
    <property type="match status" value="2"/>
</dbReference>
<dbReference type="Pfam" id="PF03725">
    <property type="entry name" value="RNase_PH_C"/>
    <property type="match status" value="2"/>
</dbReference>
<dbReference type="Pfam" id="PF00575">
    <property type="entry name" value="S1"/>
    <property type="match status" value="1"/>
</dbReference>
<dbReference type="PIRSF" id="PIRSF005499">
    <property type="entry name" value="PNPase"/>
    <property type="match status" value="1"/>
</dbReference>
<dbReference type="SMART" id="SM00322">
    <property type="entry name" value="KH"/>
    <property type="match status" value="1"/>
</dbReference>
<dbReference type="SMART" id="SM00316">
    <property type="entry name" value="S1"/>
    <property type="match status" value="1"/>
</dbReference>
<dbReference type="SUPFAM" id="SSF54791">
    <property type="entry name" value="Eukaryotic type KH-domain (KH-domain type I)"/>
    <property type="match status" value="1"/>
</dbReference>
<dbReference type="SUPFAM" id="SSF50249">
    <property type="entry name" value="Nucleic acid-binding proteins"/>
    <property type="match status" value="1"/>
</dbReference>
<dbReference type="SUPFAM" id="SSF55666">
    <property type="entry name" value="Ribonuclease PH domain 2-like"/>
    <property type="match status" value="2"/>
</dbReference>
<dbReference type="SUPFAM" id="SSF54211">
    <property type="entry name" value="Ribosomal protein S5 domain 2-like"/>
    <property type="match status" value="2"/>
</dbReference>
<dbReference type="PROSITE" id="PS50084">
    <property type="entry name" value="KH_TYPE_1"/>
    <property type="match status" value="1"/>
</dbReference>
<dbReference type="PROSITE" id="PS50126">
    <property type="entry name" value="S1"/>
    <property type="match status" value="1"/>
</dbReference>
<protein>
    <recommendedName>
        <fullName evidence="1">Polyribonucleotide nucleotidyltransferase</fullName>
        <ecNumber evidence="1">2.7.7.8</ecNumber>
    </recommendedName>
    <alternativeName>
        <fullName evidence="1">Polynucleotide phosphorylase</fullName>
        <shortName evidence="1">PNPase</shortName>
    </alternativeName>
</protein>
<organism>
    <name type="scientific">Karelsulcia muelleri (strain GWSS)</name>
    <name type="common">Sulcia muelleri</name>
    <dbReference type="NCBI Taxonomy" id="444179"/>
    <lineage>
        <taxon>Bacteria</taxon>
        <taxon>Pseudomonadati</taxon>
        <taxon>Bacteroidota</taxon>
        <taxon>Flavobacteriia</taxon>
        <taxon>Flavobacteriales</taxon>
        <taxon>Candidatus Karelsulcia</taxon>
    </lineage>
</organism>
<accession>A8Z660</accession>
<reference key="1">
    <citation type="journal article" date="2007" name="Proc. Natl. Acad. Sci. U.S.A.">
        <title>Parallel genomic evolution and metabolic interdependence in an ancient symbiosis.</title>
        <authorList>
            <person name="McCutcheon J.P."/>
            <person name="Moran N.A."/>
        </authorList>
    </citation>
    <scope>NUCLEOTIDE SEQUENCE [LARGE SCALE GENOMIC DNA]</scope>
    <source>
        <strain>GWSS</strain>
    </source>
</reference>